<accession>P74547</accession>
<dbReference type="EMBL" id="BA000022">
    <property type="protein sequence ID" value="BAA18654.1"/>
    <property type="molecule type" value="Genomic_DNA"/>
</dbReference>
<dbReference type="PIR" id="S76742">
    <property type="entry name" value="S76742"/>
</dbReference>
<dbReference type="SMR" id="P74547"/>
<dbReference type="FunCoup" id="P74547">
    <property type="interactions" value="234"/>
</dbReference>
<dbReference type="IntAct" id="P74547">
    <property type="interactions" value="1"/>
</dbReference>
<dbReference type="STRING" id="1148.gene:10500420"/>
<dbReference type="PaxDb" id="1148-1653743"/>
<dbReference type="EnsemblBacteria" id="BAA18654">
    <property type="protein sequence ID" value="BAA18654"/>
    <property type="gene ID" value="BAA18654"/>
</dbReference>
<dbReference type="KEGG" id="syn:slr1454"/>
<dbReference type="eggNOG" id="COG4208">
    <property type="taxonomic scope" value="Bacteria"/>
</dbReference>
<dbReference type="InParanoid" id="P74547"/>
<dbReference type="PhylomeDB" id="P74547"/>
<dbReference type="Proteomes" id="UP000001425">
    <property type="component" value="Chromosome"/>
</dbReference>
<dbReference type="GO" id="GO:0005886">
    <property type="term" value="C:plasma membrane"/>
    <property type="evidence" value="ECO:0000318"/>
    <property type="project" value="GO_Central"/>
</dbReference>
<dbReference type="GO" id="GO:0015419">
    <property type="term" value="F:ABC-type sulfate transporter activity"/>
    <property type="evidence" value="ECO:0007669"/>
    <property type="project" value="InterPro"/>
</dbReference>
<dbReference type="CDD" id="cd06261">
    <property type="entry name" value="TM_PBP2"/>
    <property type="match status" value="1"/>
</dbReference>
<dbReference type="FunFam" id="1.10.3720.10:FF:000004">
    <property type="entry name" value="Sulfate transport system permease protein CysT"/>
    <property type="match status" value="1"/>
</dbReference>
<dbReference type="Gene3D" id="1.10.3720.10">
    <property type="entry name" value="MetI-like"/>
    <property type="match status" value="1"/>
</dbReference>
<dbReference type="InterPro" id="IPR011866">
    <property type="entry name" value="CysW_permease"/>
</dbReference>
<dbReference type="InterPro" id="IPR000515">
    <property type="entry name" value="MetI-like"/>
</dbReference>
<dbReference type="InterPro" id="IPR035906">
    <property type="entry name" value="MetI-like_sf"/>
</dbReference>
<dbReference type="InterPro" id="IPR005667">
    <property type="entry name" value="Sulph_transpt2"/>
</dbReference>
<dbReference type="NCBIfam" id="TIGR00969">
    <property type="entry name" value="3a0106s02"/>
    <property type="match status" value="1"/>
</dbReference>
<dbReference type="NCBIfam" id="TIGR02140">
    <property type="entry name" value="permease_CysW"/>
    <property type="match status" value="1"/>
</dbReference>
<dbReference type="PANTHER" id="PTHR30406">
    <property type="entry name" value="SULFATE TRANSPORT SYSTEM PERMEASE PROTEIN"/>
    <property type="match status" value="1"/>
</dbReference>
<dbReference type="PANTHER" id="PTHR30406:SF1">
    <property type="entry name" value="SULFATE TRANSPORT SYSTEM PERMEASE PROTEIN CYSW"/>
    <property type="match status" value="1"/>
</dbReference>
<dbReference type="Pfam" id="PF00528">
    <property type="entry name" value="BPD_transp_1"/>
    <property type="match status" value="1"/>
</dbReference>
<dbReference type="SUPFAM" id="SSF161098">
    <property type="entry name" value="MetI-like"/>
    <property type="match status" value="1"/>
</dbReference>
<dbReference type="PROSITE" id="PS50928">
    <property type="entry name" value="ABC_TM1"/>
    <property type="match status" value="1"/>
</dbReference>
<reference key="1">
    <citation type="journal article" date="1996" name="DNA Res.">
        <title>Sequence analysis of the genome of the unicellular cyanobacterium Synechocystis sp. strain PCC6803. II. Sequence determination of the entire genome and assignment of potential protein-coding regions.</title>
        <authorList>
            <person name="Kaneko T."/>
            <person name="Sato S."/>
            <person name="Kotani H."/>
            <person name="Tanaka A."/>
            <person name="Asamizu E."/>
            <person name="Nakamura Y."/>
            <person name="Miyajima N."/>
            <person name="Hirosawa M."/>
            <person name="Sugiura M."/>
            <person name="Sasamoto S."/>
            <person name="Kimura T."/>
            <person name="Hosouchi T."/>
            <person name="Matsuno A."/>
            <person name="Muraki A."/>
            <person name="Nakazaki N."/>
            <person name="Naruo K."/>
            <person name="Okumura S."/>
            <person name="Shimpo S."/>
            <person name="Takeuchi C."/>
            <person name="Wada T."/>
            <person name="Watanabe A."/>
            <person name="Yamada M."/>
            <person name="Yasuda M."/>
            <person name="Tabata S."/>
        </authorList>
    </citation>
    <scope>NUCLEOTIDE SEQUENCE [LARGE SCALE GENOMIC DNA]</scope>
    <source>
        <strain>ATCC 27184 / PCC 6803 / Kazusa</strain>
    </source>
</reference>
<comment type="function">
    <text evidence="1">Part of the ABC transporter complex CysAWTP (TC 3.A.1.6.1) involved in sulfate/thiosulfate import. Probably responsible for the translocation of the substrate across the membrane (By similarity).</text>
</comment>
<comment type="subunit">
    <text evidence="3">The complex is composed of two ATP-binding proteins (CysA), two transmembrane proteins (CysT and CysW) and a solute-binding protein (CysP).</text>
</comment>
<comment type="subcellular location">
    <subcellularLocation>
        <location evidence="3">Cell inner membrane</location>
        <topology evidence="2">Multi-pass membrane protein</topology>
    </subcellularLocation>
</comment>
<comment type="similarity">
    <text evidence="3">Belongs to the binding-protein-dependent transport system permease family. CysTW subfamily.</text>
</comment>
<evidence type="ECO:0000250" key="1"/>
<evidence type="ECO:0000255" key="2">
    <source>
        <dbReference type="PROSITE-ProRule" id="PRU00441"/>
    </source>
</evidence>
<evidence type="ECO:0000305" key="3"/>
<sequence length="276" mass="30364">MLTINLPKTFKVKYLLIALALFYLILVLLLPAIAVFYEAFHKGVEPFIQAMGDRNFQSALQLTVVMALISVPLNTVFGLCAAWVLARNQFPGRALFLSVLDLPFSISPVVAGLMIVLLYGKNGWIGSWFASWDIQIIFSVPGMAIATIFVTLPFVAREVIPVLEELGPEQEEAARTLGAKDWQIFWRVTLPNIRWGLLYGVLLTNARAMGEFGAVAVVSGSILGKTSTLPIFVEQEYKNYQTEAAFGAAVVLALLAVVTLVLKEILEQRTGHHKAV</sequence>
<name>CYSW_SYNY3</name>
<gene>
    <name type="primary">cysW</name>
    <name type="ordered locus">slr1454</name>
</gene>
<proteinExistence type="inferred from homology"/>
<feature type="chain" id="PRO_0000060000" description="Sulfate transport system permease protein CysW">
    <location>
        <begin position="1"/>
        <end position="276"/>
    </location>
</feature>
<feature type="transmembrane region" description="Helical" evidence="2">
    <location>
        <begin position="16"/>
        <end position="36"/>
    </location>
</feature>
<feature type="transmembrane region" description="Helical" evidence="2">
    <location>
        <begin position="64"/>
        <end position="84"/>
    </location>
</feature>
<feature type="transmembrane region" description="Helical" evidence="2">
    <location>
        <begin position="99"/>
        <end position="119"/>
    </location>
</feature>
<feature type="transmembrane region" description="Helical" evidence="2">
    <location>
        <begin position="136"/>
        <end position="156"/>
    </location>
</feature>
<feature type="transmembrane region" description="Helical" evidence="2">
    <location>
        <begin position="212"/>
        <end position="232"/>
    </location>
</feature>
<feature type="transmembrane region" description="Helical" evidence="2">
    <location>
        <begin position="242"/>
        <end position="262"/>
    </location>
</feature>
<feature type="domain" description="ABC transmembrane type-1" evidence="2">
    <location>
        <begin position="60"/>
        <end position="267"/>
    </location>
</feature>
<keyword id="KW-0997">Cell inner membrane</keyword>
<keyword id="KW-1003">Cell membrane</keyword>
<keyword id="KW-0472">Membrane</keyword>
<keyword id="KW-1185">Reference proteome</keyword>
<keyword id="KW-0764">Sulfate transport</keyword>
<keyword id="KW-0812">Transmembrane</keyword>
<keyword id="KW-1133">Transmembrane helix</keyword>
<keyword id="KW-0813">Transport</keyword>
<organism>
    <name type="scientific">Synechocystis sp. (strain ATCC 27184 / PCC 6803 / Kazusa)</name>
    <dbReference type="NCBI Taxonomy" id="1111708"/>
    <lineage>
        <taxon>Bacteria</taxon>
        <taxon>Bacillati</taxon>
        <taxon>Cyanobacteriota</taxon>
        <taxon>Cyanophyceae</taxon>
        <taxon>Synechococcales</taxon>
        <taxon>Merismopediaceae</taxon>
        <taxon>Synechocystis</taxon>
    </lineage>
</organism>
<protein>
    <recommendedName>
        <fullName>Sulfate transport system permease protein CysW</fullName>
    </recommendedName>
</protein>